<name>RL16_ECTM1</name>
<reference key="1">
    <citation type="submission" date="2007-04" db="EMBL/GenBank/DDBJ databases">
        <title>Complete sequence of Pseudomonas mendocina ymp.</title>
        <authorList>
            <consortium name="US DOE Joint Genome Institute"/>
            <person name="Copeland A."/>
            <person name="Lucas S."/>
            <person name="Lapidus A."/>
            <person name="Barry K."/>
            <person name="Glavina del Rio T."/>
            <person name="Dalin E."/>
            <person name="Tice H."/>
            <person name="Pitluck S."/>
            <person name="Kiss H."/>
            <person name="Brettin T."/>
            <person name="Detter J.C."/>
            <person name="Bruce D."/>
            <person name="Han C."/>
            <person name="Schmutz J."/>
            <person name="Larimer F."/>
            <person name="Land M."/>
            <person name="Hauser L."/>
            <person name="Kyrpides N."/>
            <person name="Mikhailova N."/>
            <person name="Hersman L."/>
            <person name="Dubois J."/>
            <person name="Maurice P."/>
            <person name="Richardson P."/>
        </authorList>
    </citation>
    <scope>NUCLEOTIDE SEQUENCE [LARGE SCALE GENOMIC DNA]</scope>
    <source>
        <strain>ymp</strain>
    </source>
</reference>
<gene>
    <name evidence="1" type="primary">rplP</name>
    <name type="ordered locus">Pmen_3902</name>
</gene>
<keyword id="KW-0687">Ribonucleoprotein</keyword>
<keyword id="KW-0689">Ribosomal protein</keyword>
<keyword id="KW-0694">RNA-binding</keyword>
<keyword id="KW-0699">rRNA-binding</keyword>
<keyword id="KW-0820">tRNA-binding</keyword>
<dbReference type="EMBL" id="CP000680">
    <property type="protein sequence ID" value="ABP86649.1"/>
    <property type="molecule type" value="Genomic_DNA"/>
</dbReference>
<dbReference type="SMR" id="A4XZ83"/>
<dbReference type="STRING" id="399739.Pmen_3902"/>
<dbReference type="KEGG" id="pmy:Pmen_3902"/>
<dbReference type="eggNOG" id="COG0197">
    <property type="taxonomic scope" value="Bacteria"/>
</dbReference>
<dbReference type="HOGENOM" id="CLU_078858_2_1_6"/>
<dbReference type="OrthoDB" id="9802589at2"/>
<dbReference type="GO" id="GO:0022625">
    <property type="term" value="C:cytosolic large ribosomal subunit"/>
    <property type="evidence" value="ECO:0007669"/>
    <property type="project" value="TreeGrafter"/>
</dbReference>
<dbReference type="GO" id="GO:0019843">
    <property type="term" value="F:rRNA binding"/>
    <property type="evidence" value="ECO:0007669"/>
    <property type="project" value="UniProtKB-UniRule"/>
</dbReference>
<dbReference type="GO" id="GO:0003735">
    <property type="term" value="F:structural constituent of ribosome"/>
    <property type="evidence" value="ECO:0007669"/>
    <property type="project" value="InterPro"/>
</dbReference>
<dbReference type="GO" id="GO:0000049">
    <property type="term" value="F:tRNA binding"/>
    <property type="evidence" value="ECO:0007669"/>
    <property type="project" value="UniProtKB-KW"/>
</dbReference>
<dbReference type="GO" id="GO:0006412">
    <property type="term" value="P:translation"/>
    <property type="evidence" value="ECO:0007669"/>
    <property type="project" value="UniProtKB-UniRule"/>
</dbReference>
<dbReference type="CDD" id="cd01433">
    <property type="entry name" value="Ribosomal_L16_L10e"/>
    <property type="match status" value="1"/>
</dbReference>
<dbReference type="FunFam" id="3.90.1170.10:FF:000001">
    <property type="entry name" value="50S ribosomal protein L16"/>
    <property type="match status" value="1"/>
</dbReference>
<dbReference type="Gene3D" id="3.90.1170.10">
    <property type="entry name" value="Ribosomal protein L10e/L16"/>
    <property type="match status" value="1"/>
</dbReference>
<dbReference type="HAMAP" id="MF_01342">
    <property type="entry name" value="Ribosomal_uL16"/>
    <property type="match status" value="1"/>
</dbReference>
<dbReference type="InterPro" id="IPR047873">
    <property type="entry name" value="Ribosomal_uL16"/>
</dbReference>
<dbReference type="InterPro" id="IPR000114">
    <property type="entry name" value="Ribosomal_uL16_bact-type"/>
</dbReference>
<dbReference type="InterPro" id="IPR020798">
    <property type="entry name" value="Ribosomal_uL16_CS"/>
</dbReference>
<dbReference type="InterPro" id="IPR016180">
    <property type="entry name" value="Ribosomal_uL16_dom"/>
</dbReference>
<dbReference type="InterPro" id="IPR036920">
    <property type="entry name" value="Ribosomal_uL16_sf"/>
</dbReference>
<dbReference type="NCBIfam" id="TIGR01164">
    <property type="entry name" value="rplP_bact"/>
    <property type="match status" value="1"/>
</dbReference>
<dbReference type="PANTHER" id="PTHR12220">
    <property type="entry name" value="50S/60S RIBOSOMAL PROTEIN L16"/>
    <property type="match status" value="1"/>
</dbReference>
<dbReference type="PANTHER" id="PTHR12220:SF13">
    <property type="entry name" value="LARGE RIBOSOMAL SUBUNIT PROTEIN UL16M"/>
    <property type="match status" value="1"/>
</dbReference>
<dbReference type="Pfam" id="PF00252">
    <property type="entry name" value="Ribosomal_L16"/>
    <property type="match status" value="1"/>
</dbReference>
<dbReference type="PRINTS" id="PR00060">
    <property type="entry name" value="RIBOSOMALL16"/>
</dbReference>
<dbReference type="SUPFAM" id="SSF54686">
    <property type="entry name" value="Ribosomal protein L16p/L10e"/>
    <property type="match status" value="1"/>
</dbReference>
<dbReference type="PROSITE" id="PS00586">
    <property type="entry name" value="RIBOSOMAL_L16_1"/>
    <property type="match status" value="1"/>
</dbReference>
<dbReference type="PROSITE" id="PS00701">
    <property type="entry name" value="RIBOSOMAL_L16_2"/>
    <property type="match status" value="1"/>
</dbReference>
<sequence length="137" mass="15388">MLQPKRTKFRKQMTGHNRGLAQRGSKVSFGEFALKSVARGRLTARQIESARRALTRHVKRGGKIWIRVFPDKPVTKKPLEVRMGKGKGGVEYWVAQIQPGKVLYEIEGVSEELAREAFALAAAKLPLATTFVKRTVM</sequence>
<comment type="function">
    <text evidence="1">Binds 23S rRNA and is also seen to make contacts with the A and possibly P site tRNAs.</text>
</comment>
<comment type="subunit">
    <text evidence="1">Part of the 50S ribosomal subunit.</text>
</comment>
<comment type="similarity">
    <text evidence="1">Belongs to the universal ribosomal protein uL16 family.</text>
</comment>
<evidence type="ECO:0000255" key="1">
    <source>
        <dbReference type="HAMAP-Rule" id="MF_01342"/>
    </source>
</evidence>
<evidence type="ECO:0000305" key="2"/>
<protein>
    <recommendedName>
        <fullName evidence="1">Large ribosomal subunit protein uL16</fullName>
    </recommendedName>
    <alternativeName>
        <fullName evidence="2">50S ribosomal protein L16</fullName>
    </alternativeName>
</protein>
<accession>A4XZ83</accession>
<feature type="chain" id="PRO_1000054683" description="Large ribosomal subunit protein uL16">
    <location>
        <begin position="1"/>
        <end position="137"/>
    </location>
</feature>
<proteinExistence type="inferred from homology"/>
<organism>
    <name type="scientific">Ectopseudomonas mendocina (strain ymp)</name>
    <name type="common">Pseudomonas mendocina</name>
    <dbReference type="NCBI Taxonomy" id="399739"/>
    <lineage>
        <taxon>Bacteria</taxon>
        <taxon>Pseudomonadati</taxon>
        <taxon>Pseudomonadota</taxon>
        <taxon>Gammaproteobacteria</taxon>
        <taxon>Pseudomonadales</taxon>
        <taxon>Pseudomonadaceae</taxon>
        <taxon>Ectopseudomonas</taxon>
    </lineage>
</organism>